<reference key="1">
    <citation type="journal article" date="2002" name="J. Bacteriol.">
        <title>Whole-genome comparison of Mycobacterium tuberculosis clinical and laboratory strains.</title>
        <authorList>
            <person name="Fleischmann R.D."/>
            <person name="Alland D."/>
            <person name="Eisen J.A."/>
            <person name="Carpenter L."/>
            <person name="White O."/>
            <person name="Peterson J.D."/>
            <person name="DeBoy R.T."/>
            <person name="Dodson R.J."/>
            <person name="Gwinn M.L."/>
            <person name="Haft D.H."/>
            <person name="Hickey E.K."/>
            <person name="Kolonay J.F."/>
            <person name="Nelson W.C."/>
            <person name="Umayam L.A."/>
            <person name="Ermolaeva M.D."/>
            <person name="Salzberg S.L."/>
            <person name="Delcher A."/>
            <person name="Utterback T.R."/>
            <person name="Weidman J.F."/>
            <person name="Khouri H.M."/>
            <person name="Gill J."/>
            <person name="Mikula A."/>
            <person name="Bishai W."/>
            <person name="Jacobs W.R. Jr."/>
            <person name="Venter J.C."/>
            <person name="Fraser C.M."/>
        </authorList>
    </citation>
    <scope>NUCLEOTIDE SEQUENCE [LARGE SCALE GENOMIC DNA]</scope>
    <source>
        <strain>CDC 1551 / Oshkosh</strain>
    </source>
</reference>
<accession>P9WJQ6</accession>
<accession>L0T705</accession>
<accession>O05577</accession>
<evidence type="ECO:0000250" key="1"/>
<evidence type="ECO:0000305" key="2"/>
<name>MOEA1_MYCTO</name>
<gene>
    <name type="primary">moeA1</name>
    <name type="synonym">moeA</name>
    <name type="ordered locus">MT1023</name>
</gene>
<protein>
    <recommendedName>
        <fullName>Molybdopterin molybdenumtransferase 1</fullName>
        <shortName>MPT Mo-transferase 1</shortName>
        <ecNumber>2.10.1.1</ecNumber>
    </recommendedName>
</protein>
<comment type="function">
    <text evidence="1">Catalyzes the insertion of molybdate into adenylated molybdopterin with the concomitant release of AMP.</text>
</comment>
<comment type="catalytic activity">
    <reaction>
        <text>adenylyl-molybdopterin + molybdate = Mo-molybdopterin + AMP + H(+)</text>
        <dbReference type="Rhea" id="RHEA:35047"/>
        <dbReference type="ChEBI" id="CHEBI:15378"/>
        <dbReference type="ChEBI" id="CHEBI:36264"/>
        <dbReference type="ChEBI" id="CHEBI:62727"/>
        <dbReference type="ChEBI" id="CHEBI:71302"/>
        <dbReference type="ChEBI" id="CHEBI:456215"/>
        <dbReference type="EC" id="2.10.1.1"/>
    </reaction>
</comment>
<comment type="cofactor">
    <cofactor evidence="1">
        <name>Mg(2+)</name>
        <dbReference type="ChEBI" id="CHEBI:18420"/>
    </cofactor>
    <text evidence="1">Binds 1 Mg(2+) ion per subunit.</text>
</comment>
<comment type="pathway">
    <text>Cofactor biosynthesis; molybdopterin biosynthesis.</text>
</comment>
<comment type="similarity">
    <text evidence="2">Belongs to the MoeA family.</text>
</comment>
<keyword id="KW-0460">Magnesium</keyword>
<keyword id="KW-0479">Metal-binding</keyword>
<keyword id="KW-0500">Molybdenum</keyword>
<keyword id="KW-0501">Molybdenum cofactor biosynthesis</keyword>
<keyword id="KW-1185">Reference proteome</keyword>
<keyword id="KW-0808">Transferase</keyword>
<sequence length="426" mass="44337">MRSVEEQQARISAAAVAPRPIRVAIAEAQGLMCAEEVVTERPMPGFDQAAIDGYAVRSVDVAGVGDTGGVQVFADHGDLDGRDVLTLPVMGTIEAGARTLSRLQPRQAVRVQTGAPLPTLADAVLPLRWTDGGMSRVRVLRGAPSGAYVRRAGDDVQPGDVAVRAGTIIGAAQVGLLAAVGRERVLVHPRPRLSVMAVGGELVDISRTPGNGQVYDVNSYALAAAGRDACAEVNRVGIVSNDPTELGEIVEGQLNRAEVVVIAGGVGGAAAEAVRSVLSELGEMEVVRVAMHPGSVQGFGQLGRDGVPTFLLPANPVSALVVFEVMVRPLIRLSLGKRHPMRRIVSARTLSPITSVAGRKGYLRGQLMRDQDSGEYLVQALGGAPGASSHLLATLAEANCLVVVPTGAEQIRTGEIVDVAFLAQHG</sequence>
<organism>
    <name type="scientific">Mycobacterium tuberculosis (strain CDC 1551 / Oshkosh)</name>
    <dbReference type="NCBI Taxonomy" id="83331"/>
    <lineage>
        <taxon>Bacteria</taxon>
        <taxon>Bacillati</taxon>
        <taxon>Actinomycetota</taxon>
        <taxon>Actinomycetes</taxon>
        <taxon>Mycobacteriales</taxon>
        <taxon>Mycobacteriaceae</taxon>
        <taxon>Mycobacterium</taxon>
        <taxon>Mycobacterium tuberculosis complex</taxon>
    </lineage>
</organism>
<dbReference type="EC" id="2.10.1.1"/>
<dbReference type="EMBL" id="AE000516">
    <property type="protein sequence ID" value="AAK45270.1"/>
    <property type="molecule type" value="Genomic_DNA"/>
</dbReference>
<dbReference type="PIR" id="E70601">
    <property type="entry name" value="E70601"/>
</dbReference>
<dbReference type="SMR" id="P9WJQ6"/>
<dbReference type="KEGG" id="mtc:MT1023"/>
<dbReference type="PATRIC" id="fig|83331.31.peg.1096"/>
<dbReference type="HOGENOM" id="CLU_010186_7_0_11"/>
<dbReference type="UniPathway" id="UPA00344"/>
<dbReference type="Proteomes" id="UP000001020">
    <property type="component" value="Chromosome"/>
</dbReference>
<dbReference type="GO" id="GO:0005829">
    <property type="term" value="C:cytosol"/>
    <property type="evidence" value="ECO:0007669"/>
    <property type="project" value="TreeGrafter"/>
</dbReference>
<dbReference type="GO" id="GO:0046872">
    <property type="term" value="F:metal ion binding"/>
    <property type="evidence" value="ECO:0007669"/>
    <property type="project" value="UniProtKB-KW"/>
</dbReference>
<dbReference type="GO" id="GO:0061599">
    <property type="term" value="F:molybdopterin molybdotransferase activity"/>
    <property type="evidence" value="ECO:0007669"/>
    <property type="project" value="UniProtKB-EC"/>
</dbReference>
<dbReference type="GO" id="GO:0006777">
    <property type="term" value="P:Mo-molybdopterin cofactor biosynthetic process"/>
    <property type="evidence" value="ECO:0007669"/>
    <property type="project" value="UniProtKB-KW"/>
</dbReference>
<dbReference type="CDD" id="cd00887">
    <property type="entry name" value="MoeA"/>
    <property type="match status" value="1"/>
</dbReference>
<dbReference type="FunFam" id="2.170.190.11:FF:000011">
    <property type="entry name" value="Molybdopterin molybdenumtransferase"/>
    <property type="match status" value="1"/>
</dbReference>
<dbReference type="FunFam" id="3.40.980.10:FF:000012">
    <property type="entry name" value="Molybdopterin molybdenumtransferase"/>
    <property type="match status" value="1"/>
</dbReference>
<dbReference type="Gene3D" id="3.40.980.10">
    <property type="entry name" value="MoaB/Mog-like domain"/>
    <property type="match status" value="1"/>
</dbReference>
<dbReference type="Gene3D" id="2.40.340.10">
    <property type="entry name" value="MoeA, C-terminal, domain IV"/>
    <property type="match status" value="1"/>
</dbReference>
<dbReference type="Gene3D" id="3.90.105.10">
    <property type="entry name" value="Molybdopterin biosynthesis moea protein, domain 2"/>
    <property type="match status" value="1"/>
</dbReference>
<dbReference type="Gene3D" id="2.170.190.11">
    <property type="entry name" value="Molybdopterin biosynthesis moea protein, domain 3"/>
    <property type="match status" value="1"/>
</dbReference>
<dbReference type="InterPro" id="IPR036425">
    <property type="entry name" value="MoaB/Mog-like_dom_sf"/>
</dbReference>
<dbReference type="InterPro" id="IPR001453">
    <property type="entry name" value="MoaB/Mog_dom"/>
</dbReference>
<dbReference type="InterPro" id="IPR038987">
    <property type="entry name" value="MoeA-like"/>
</dbReference>
<dbReference type="InterPro" id="IPR005111">
    <property type="entry name" value="MoeA_C_domain_IV"/>
</dbReference>
<dbReference type="InterPro" id="IPR036688">
    <property type="entry name" value="MoeA_C_domain_IV_sf"/>
</dbReference>
<dbReference type="InterPro" id="IPR005110">
    <property type="entry name" value="MoeA_linker/N"/>
</dbReference>
<dbReference type="InterPro" id="IPR036135">
    <property type="entry name" value="MoeA_linker/N_sf"/>
</dbReference>
<dbReference type="NCBIfam" id="NF045515">
    <property type="entry name" value="Glp_gephyrin"/>
    <property type="match status" value="1"/>
</dbReference>
<dbReference type="NCBIfam" id="TIGR00177">
    <property type="entry name" value="molyb_syn"/>
    <property type="match status" value="1"/>
</dbReference>
<dbReference type="PANTHER" id="PTHR10192:SF5">
    <property type="entry name" value="GEPHYRIN"/>
    <property type="match status" value="1"/>
</dbReference>
<dbReference type="PANTHER" id="PTHR10192">
    <property type="entry name" value="MOLYBDOPTERIN BIOSYNTHESIS PROTEIN"/>
    <property type="match status" value="1"/>
</dbReference>
<dbReference type="Pfam" id="PF00994">
    <property type="entry name" value="MoCF_biosynth"/>
    <property type="match status" value="1"/>
</dbReference>
<dbReference type="Pfam" id="PF03454">
    <property type="entry name" value="MoeA_C"/>
    <property type="match status" value="1"/>
</dbReference>
<dbReference type="Pfam" id="PF03453">
    <property type="entry name" value="MoeA_N"/>
    <property type="match status" value="1"/>
</dbReference>
<dbReference type="SMART" id="SM00852">
    <property type="entry name" value="MoCF_biosynth"/>
    <property type="match status" value="1"/>
</dbReference>
<dbReference type="SUPFAM" id="SSF63867">
    <property type="entry name" value="MoeA C-terminal domain-like"/>
    <property type="match status" value="1"/>
</dbReference>
<dbReference type="SUPFAM" id="SSF63882">
    <property type="entry name" value="MoeA N-terminal region -like"/>
    <property type="match status" value="1"/>
</dbReference>
<dbReference type="SUPFAM" id="SSF53218">
    <property type="entry name" value="Molybdenum cofactor biosynthesis proteins"/>
    <property type="match status" value="1"/>
</dbReference>
<feature type="chain" id="PRO_0000427788" description="Molybdopterin molybdenumtransferase 1">
    <location>
        <begin position="1"/>
        <end position="426"/>
    </location>
</feature>
<proteinExistence type="inferred from homology"/>